<feature type="chain" id="PRO_1000045372" description="Probable transcriptional regulatory protein Smed_2641">
    <location>
        <begin position="1"/>
        <end position="248"/>
    </location>
</feature>
<sequence>MAGHSQFKNIMHRKGRQDAVRSKMFSKLAREITVAAKAGLPDPAMNPRLRLAIQNAKAQSMPKDNIERAVKKAAGGDAETYEEVRYEGYGPAGVAVIVEALTDNRNRTASNVRSIFTKAGGALGETGSVSFSFDRVGEITYKLSVGDADTVMEAAIEAGADDVETDEEGHTITCGFEDIGEVSKALEGALGEAETVKAVWKPQNTVPVDEEKAQSLMKLIDNLEDDDDVQNVYSNFEVSEEVLAKLSA</sequence>
<protein>
    <recommendedName>
        <fullName evidence="1">Probable transcriptional regulatory protein Smed_2641</fullName>
    </recommendedName>
</protein>
<comment type="subcellular location">
    <subcellularLocation>
        <location evidence="1">Cytoplasm</location>
    </subcellularLocation>
</comment>
<comment type="similarity">
    <text evidence="1">Belongs to the TACO1 family.</text>
</comment>
<organism>
    <name type="scientific">Sinorhizobium medicae (strain WSM419)</name>
    <name type="common">Ensifer medicae</name>
    <dbReference type="NCBI Taxonomy" id="366394"/>
    <lineage>
        <taxon>Bacteria</taxon>
        <taxon>Pseudomonadati</taxon>
        <taxon>Pseudomonadota</taxon>
        <taxon>Alphaproteobacteria</taxon>
        <taxon>Hyphomicrobiales</taxon>
        <taxon>Rhizobiaceae</taxon>
        <taxon>Sinorhizobium/Ensifer group</taxon>
        <taxon>Sinorhizobium</taxon>
    </lineage>
</organism>
<evidence type="ECO:0000255" key="1">
    <source>
        <dbReference type="HAMAP-Rule" id="MF_00693"/>
    </source>
</evidence>
<accession>A6UCU1</accession>
<reference key="1">
    <citation type="submission" date="2007-06" db="EMBL/GenBank/DDBJ databases">
        <title>Complete sequence of Sinorhizobium medicae WSM419 chromosome.</title>
        <authorList>
            <consortium name="US DOE Joint Genome Institute"/>
            <person name="Copeland A."/>
            <person name="Lucas S."/>
            <person name="Lapidus A."/>
            <person name="Barry K."/>
            <person name="Glavina del Rio T."/>
            <person name="Dalin E."/>
            <person name="Tice H."/>
            <person name="Pitluck S."/>
            <person name="Chain P."/>
            <person name="Malfatti S."/>
            <person name="Shin M."/>
            <person name="Vergez L."/>
            <person name="Schmutz J."/>
            <person name="Larimer F."/>
            <person name="Land M."/>
            <person name="Hauser L."/>
            <person name="Kyrpides N."/>
            <person name="Mikhailova N."/>
            <person name="Reeve W.G."/>
            <person name="Richardson P."/>
        </authorList>
    </citation>
    <scope>NUCLEOTIDE SEQUENCE [LARGE SCALE GENOMIC DNA]</scope>
    <source>
        <strain>WSM419</strain>
    </source>
</reference>
<proteinExistence type="inferred from homology"/>
<dbReference type="EMBL" id="CP000738">
    <property type="protein sequence ID" value="ABR61471.1"/>
    <property type="molecule type" value="Genomic_DNA"/>
</dbReference>
<dbReference type="RefSeq" id="WP_012066860.1">
    <property type="nucleotide sequence ID" value="NC_009636.1"/>
</dbReference>
<dbReference type="RefSeq" id="YP_001328306.1">
    <property type="nucleotide sequence ID" value="NC_009636.1"/>
</dbReference>
<dbReference type="SMR" id="A6UCU1"/>
<dbReference type="STRING" id="366394.Smed_2641"/>
<dbReference type="KEGG" id="smd:Smed_2641"/>
<dbReference type="PATRIC" id="fig|366394.8.peg.5839"/>
<dbReference type="eggNOG" id="COG0217">
    <property type="taxonomic scope" value="Bacteria"/>
</dbReference>
<dbReference type="HOGENOM" id="CLU_062974_2_2_5"/>
<dbReference type="OrthoDB" id="9781053at2"/>
<dbReference type="Proteomes" id="UP000001108">
    <property type="component" value="Chromosome"/>
</dbReference>
<dbReference type="GO" id="GO:0005829">
    <property type="term" value="C:cytosol"/>
    <property type="evidence" value="ECO:0007669"/>
    <property type="project" value="TreeGrafter"/>
</dbReference>
<dbReference type="GO" id="GO:0003677">
    <property type="term" value="F:DNA binding"/>
    <property type="evidence" value="ECO:0007669"/>
    <property type="project" value="UniProtKB-UniRule"/>
</dbReference>
<dbReference type="GO" id="GO:0006355">
    <property type="term" value="P:regulation of DNA-templated transcription"/>
    <property type="evidence" value="ECO:0007669"/>
    <property type="project" value="UniProtKB-UniRule"/>
</dbReference>
<dbReference type="FunFam" id="1.10.10.200:FF:000002">
    <property type="entry name" value="Probable transcriptional regulatory protein CLM62_37755"/>
    <property type="match status" value="1"/>
</dbReference>
<dbReference type="Gene3D" id="1.10.10.200">
    <property type="match status" value="1"/>
</dbReference>
<dbReference type="Gene3D" id="3.30.70.980">
    <property type="match status" value="2"/>
</dbReference>
<dbReference type="HAMAP" id="MF_00693">
    <property type="entry name" value="Transcrip_reg_TACO1"/>
    <property type="match status" value="1"/>
</dbReference>
<dbReference type="InterPro" id="IPR017856">
    <property type="entry name" value="Integrase-like_N"/>
</dbReference>
<dbReference type="InterPro" id="IPR048300">
    <property type="entry name" value="TACO1_YebC-like_2nd/3rd_dom"/>
</dbReference>
<dbReference type="InterPro" id="IPR049083">
    <property type="entry name" value="TACO1_YebC_N"/>
</dbReference>
<dbReference type="InterPro" id="IPR002876">
    <property type="entry name" value="Transcrip_reg_TACO1-like"/>
</dbReference>
<dbReference type="InterPro" id="IPR026564">
    <property type="entry name" value="Transcrip_reg_TACO1-like_dom3"/>
</dbReference>
<dbReference type="InterPro" id="IPR029072">
    <property type="entry name" value="YebC-like"/>
</dbReference>
<dbReference type="NCBIfam" id="NF001030">
    <property type="entry name" value="PRK00110.1"/>
    <property type="match status" value="1"/>
</dbReference>
<dbReference type="NCBIfam" id="NF009044">
    <property type="entry name" value="PRK12378.1"/>
    <property type="match status" value="1"/>
</dbReference>
<dbReference type="NCBIfam" id="TIGR01033">
    <property type="entry name" value="YebC/PmpR family DNA-binding transcriptional regulator"/>
    <property type="match status" value="1"/>
</dbReference>
<dbReference type="PANTHER" id="PTHR12532:SF6">
    <property type="entry name" value="TRANSCRIPTIONAL REGULATORY PROTEIN YEBC-RELATED"/>
    <property type="match status" value="1"/>
</dbReference>
<dbReference type="PANTHER" id="PTHR12532">
    <property type="entry name" value="TRANSLATIONAL ACTIVATOR OF CYTOCHROME C OXIDASE 1"/>
    <property type="match status" value="1"/>
</dbReference>
<dbReference type="Pfam" id="PF20772">
    <property type="entry name" value="TACO1_YebC_N"/>
    <property type="match status" value="1"/>
</dbReference>
<dbReference type="Pfam" id="PF01709">
    <property type="entry name" value="Transcrip_reg"/>
    <property type="match status" value="1"/>
</dbReference>
<dbReference type="SUPFAM" id="SSF75625">
    <property type="entry name" value="YebC-like"/>
    <property type="match status" value="1"/>
</dbReference>
<gene>
    <name type="ordered locus">Smed_2641</name>
</gene>
<keyword id="KW-0963">Cytoplasm</keyword>
<keyword id="KW-0238">DNA-binding</keyword>
<keyword id="KW-0804">Transcription</keyword>
<keyword id="KW-0805">Transcription regulation</keyword>
<name>Y2641_SINMW</name>